<name>PORD_PYRHO</name>
<keyword id="KW-0004">4Fe-4S</keyword>
<keyword id="KW-0249">Electron transport</keyword>
<keyword id="KW-0408">Iron</keyword>
<keyword id="KW-0411">Iron-sulfur</keyword>
<keyword id="KW-0479">Metal-binding</keyword>
<keyword id="KW-0677">Repeat</keyword>
<keyword id="KW-0813">Transport</keyword>
<organism>
    <name type="scientific">Pyrococcus horikoshii (strain ATCC 700860 / DSM 12428 / JCM 9974 / NBRC 100139 / OT-3)</name>
    <dbReference type="NCBI Taxonomy" id="70601"/>
    <lineage>
        <taxon>Archaea</taxon>
        <taxon>Methanobacteriati</taxon>
        <taxon>Methanobacteriota</taxon>
        <taxon>Thermococci</taxon>
        <taxon>Thermococcales</taxon>
        <taxon>Thermococcaceae</taxon>
        <taxon>Pyrococcus</taxon>
    </lineage>
</organism>
<protein>
    <recommendedName>
        <fullName>Pyruvate synthase subunit PorD</fullName>
    </recommendedName>
    <alternativeName>
        <fullName>Pyruvate oxidoreductase delta chain</fullName>
        <shortName>POR</shortName>
    </alternativeName>
    <alternativeName>
        <fullName>Pyruvic-ferredoxin oxidoreductase subunit delta</fullName>
    </alternativeName>
</protein>
<dbReference type="EMBL" id="BA000001">
    <property type="protein sequence ID" value="BAA29773.1"/>
    <property type="status" value="ALT_INIT"/>
    <property type="molecule type" value="Genomic_DNA"/>
</dbReference>
<dbReference type="PIR" id="C71114">
    <property type="entry name" value="C71114"/>
</dbReference>
<dbReference type="RefSeq" id="WP_048053191.1">
    <property type="nucleotide sequence ID" value="NC_000961.1"/>
</dbReference>
<dbReference type="SMR" id="O58415"/>
<dbReference type="STRING" id="70601.gene:9377627"/>
<dbReference type="EnsemblBacteria" id="BAA29773">
    <property type="protein sequence ID" value="BAA29773"/>
    <property type="gene ID" value="BAA29773"/>
</dbReference>
<dbReference type="GeneID" id="1443010"/>
<dbReference type="KEGG" id="pho:PH0682"/>
<dbReference type="eggNOG" id="arCOG01605">
    <property type="taxonomic scope" value="Archaea"/>
</dbReference>
<dbReference type="OrthoDB" id="23478at2157"/>
<dbReference type="Proteomes" id="UP000000752">
    <property type="component" value="Chromosome"/>
</dbReference>
<dbReference type="GO" id="GO:0051539">
    <property type="term" value="F:4 iron, 4 sulfur cluster binding"/>
    <property type="evidence" value="ECO:0007669"/>
    <property type="project" value="UniProtKB-KW"/>
</dbReference>
<dbReference type="GO" id="GO:0046872">
    <property type="term" value="F:metal ion binding"/>
    <property type="evidence" value="ECO:0007669"/>
    <property type="project" value="UniProtKB-KW"/>
</dbReference>
<dbReference type="GO" id="GO:0016625">
    <property type="term" value="F:oxidoreductase activity, acting on the aldehyde or oxo group of donors, iron-sulfur protein as acceptor"/>
    <property type="evidence" value="ECO:0007669"/>
    <property type="project" value="InterPro"/>
</dbReference>
<dbReference type="Gene3D" id="3.30.70.20">
    <property type="match status" value="1"/>
</dbReference>
<dbReference type="InterPro" id="IPR017896">
    <property type="entry name" value="4Fe4S_Fe-S-bd"/>
</dbReference>
<dbReference type="InterPro" id="IPR017900">
    <property type="entry name" value="4Fe4S_Fe_S_CS"/>
</dbReference>
<dbReference type="InterPro" id="IPR011898">
    <property type="entry name" value="PorD_KorD"/>
</dbReference>
<dbReference type="InterPro" id="IPR053389">
    <property type="entry name" value="Pyruvate_synthase_PorD"/>
</dbReference>
<dbReference type="NCBIfam" id="NF040684">
    <property type="entry name" value="PorD_Arch"/>
    <property type="match status" value="1"/>
</dbReference>
<dbReference type="NCBIfam" id="TIGR02179">
    <property type="entry name" value="PorD_KorD"/>
    <property type="match status" value="1"/>
</dbReference>
<dbReference type="NCBIfam" id="NF007203">
    <property type="entry name" value="PRK09624.1"/>
    <property type="match status" value="1"/>
</dbReference>
<dbReference type="PANTHER" id="PTHR43724">
    <property type="entry name" value="PYRUVATE SYNTHASE SUBUNIT PORD"/>
    <property type="match status" value="1"/>
</dbReference>
<dbReference type="PANTHER" id="PTHR43724:SF2">
    <property type="entry name" value="PYRUVATE SYNTHASE SUBUNIT PORD"/>
    <property type="match status" value="1"/>
</dbReference>
<dbReference type="Pfam" id="PF14697">
    <property type="entry name" value="Fer4_21"/>
    <property type="match status" value="1"/>
</dbReference>
<dbReference type="SUPFAM" id="SSF54862">
    <property type="entry name" value="4Fe-4S ferredoxins"/>
    <property type="match status" value="1"/>
</dbReference>
<dbReference type="PROSITE" id="PS00198">
    <property type="entry name" value="4FE4S_FER_1"/>
    <property type="match status" value="2"/>
</dbReference>
<dbReference type="PROSITE" id="PS51379">
    <property type="entry name" value="4FE4S_FER_2"/>
    <property type="match status" value="2"/>
</dbReference>
<sequence length="105" mass="11977">MAESPFKADIERAQKELTEKMTPGAIAYIPGSSVINKTGSWRVFKPEFHKDKCVRCFLCYIYCPEPAIYLDEEGYPVFDYDYCKGCGICANECPTKAIEMVREVK</sequence>
<proteinExistence type="inferred from homology"/>
<gene>
    <name type="primary">porD</name>
    <name type="ordered locus">PH0682</name>
</gene>
<evidence type="ECO:0000250" key="1"/>
<evidence type="ECO:0000250" key="2">
    <source>
        <dbReference type="UniProtKB" id="P94692"/>
    </source>
</evidence>
<evidence type="ECO:0000255" key="3">
    <source>
        <dbReference type="PROSITE-ProRule" id="PRU00711"/>
    </source>
</evidence>
<evidence type="ECO:0000305" key="4"/>
<reference key="1">
    <citation type="journal article" date="1998" name="DNA Res.">
        <title>Complete sequence and gene organization of the genome of a hyper-thermophilic archaebacterium, Pyrococcus horikoshii OT3.</title>
        <authorList>
            <person name="Kawarabayasi Y."/>
            <person name="Sawada M."/>
            <person name="Horikawa H."/>
            <person name="Haikawa Y."/>
            <person name="Hino Y."/>
            <person name="Yamamoto S."/>
            <person name="Sekine M."/>
            <person name="Baba S."/>
            <person name="Kosugi H."/>
            <person name="Hosoyama A."/>
            <person name="Nagai Y."/>
            <person name="Sakai M."/>
            <person name="Ogura K."/>
            <person name="Otsuka R."/>
            <person name="Nakazawa H."/>
            <person name="Takamiya M."/>
            <person name="Ohfuku Y."/>
            <person name="Funahashi T."/>
            <person name="Tanaka T."/>
            <person name="Kudoh Y."/>
            <person name="Yamazaki J."/>
            <person name="Kushida N."/>
            <person name="Oguchi A."/>
            <person name="Aoki K."/>
            <person name="Yoshizawa T."/>
            <person name="Nakamura Y."/>
            <person name="Robb F.T."/>
            <person name="Horikoshi K."/>
            <person name="Masuchi Y."/>
            <person name="Shizuya H."/>
            <person name="Kikuchi H."/>
        </authorList>
    </citation>
    <scope>NUCLEOTIDE SEQUENCE [LARGE SCALE GENOMIC DNA]</scope>
    <source>
        <strain>ATCC 700860 / DSM 12428 / JCM 9974 / NBRC 100139 / OT-3</strain>
    </source>
</reference>
<comment type="cofactor">
    <cofactor evidence="2">
        <name>[4Fe-4S] cluster</name>
        <dbReference type="ChEBI" id="CHEBI:49883"/>
    </cofactor>
    <text evidence="2">Binds 2 [4Fe-4S] clusters.</text>
</comment>
<comment type="subunit">
    <text evidence="1">Heterotetramer of one alpha, one beta, one delta and one gamma chain.</text>
</comment>
<comment type="sequence caution" evidence="4">
    <conflict type="erroneous initiation">
        <sequence resource="EMBL-CDS" id="BAA29773"/>
    </conflict>
</comment>
<feature type="initiator methionine" description="Removed" evidence="1">
    <location>
        <position position="1"/>
    </location>
</feature>
<feature type="chain" id="PRO_0000099923" description="Pyruvate synthase subunit PorD">
    <location>
        <begin position="2"/>
        <end position="105"/>
    </location>
</feature>
<feature type="domain" description="4Fe-4S ferredoxin-type 1" evidence="3">
    <location>
        <begin position="44"/>
        <end position="73"/>
    </location>
</feature>
<feature type="domain" description="4Fe-4S ferredoxin-type 2" evidence="3">
    <location>
        <begin position="74"/>
        <end position="103"/>
    </location>
</feature>
<feature type="binding site" evidence="2">
    <location>
        <position position="53"/>
    </location>
    <ligand>
        <name>[4Fe-4S] cluster</name>
        <dbReference type="ChEBI" id="CHEBI:49883"/>
        <label>1</label>
    </ligand>
</feature>
<feature type="binding site" evidence="2">
    <location>
        <position position="56"/>
    </location>
    <ligand>
        <name>[4Fe-4S] cluster</name>
        <dbReference type="ChEBI" id="CHEBI:49883"/>
        <label>1</label>
    </ligand>
</feature>
<feature type="binding site" evidence="2">
    <location>
        <position position="59"/>
    </location>
    <ligand>
        <name>[4Fe-4S] cluster</name>
        <dbReference type="ChEBI" id="CHEBI:49883"/>
        <label>1</label>
    </ligand>
</feature>
<feature type="binding site" evidence="2">
    <location>
        <position position="63"/>
    </location>
    <ligand>
        <name>[4Fe-4S] cluster</name>
        <dbReference type="ChEBI" id="CHEBI:49883"/>
        <label>2</label>
    </ligand>
</feature>
<feature type="binding site" evidence="2">
    <location>
        <position position="83"/>
    </location>
    <ligand>
        <name>[4Fe-4S] cluster</name>
        <dbReference type="ChEBI" id="CHEBI:49883"/>
        <label>2</label>
    </ligand>
</feature>
<feature type="binding site" evidence="2">
    <location>
        <position position="86"/>
    </location>
    <ligand>
        <name>[4Fe-4S] cluster</name>
        <dbReference type="ChEBI" id="CHEBI:49883"/>
        <label>2</label>
    </ligand>
</feature>
<feature type="binding site" evidence="2">
    <location>
        <position position="89"/>
    </location>
    <ligand>
        <name>[4Fe-4S] cluster</name>
        <dbReference type="ChEBI" id="CHEBI:49883"/>
        <label>2</label>
    </ligand>
</feature>
<feature type="binding site" evidence="2">
    <location>
        <position position="93"/>
    </location>
    <ligand>
        <name>[4Fe-4S] cluster</name>
        <dbReference type="ChEBI" id="CHEBI:49883"/>
        <label>1</label>
    </ligand>
</feature>
<accession>O58415</accession>